<gene>
    <name evidence="1" type="primary">tig</name>
    <name type="ordered locus">A1I_00735</name>
</gene>
<feature type="chain" id="PRO_1000022745" description="Trigger factor">
    <location>
        <begin position="1"/>
        <end position="445"/>
    </location>
</feature>
<feature type="domain" description="PPIase FKBP-type" evidence="1">
    <location>
        <begin position="162"/>
        <end position="247"/>
    </location>
</feature>
<evidence type="ECO:0000255" key="1">
    <source>
        <dbReference type="HAMAP-Rule" id="MF_00303"/>
    </source>
</evidence>
<reference key="1">
    <citation type="submission" date="2007-09" db="EMBL/GenBank/DDBJ databases">
        <title>Complete genome sequencing of Rickettsia bellii.</title>
        <authorList>
            <person name="Madan A."/>
            <person name="Lee H."/>
            <person name="Madan A."/>
            <person name="Yoon J.-G."/>
            <person name="Ryu G.-Y."/>
            <person name="Dasch G."/>
            <person name="Ereemeva M."/>
        </authorList>
    </citation>
    <scope>NUCLEOTIDE SEQUENCE [LARGE SCALE GENOMIC DNA]</scope>
    <source>
        <strain>OSU 85-389</strain>
    </source>
</reference>
<name>TIG_RICB8</name>
<proteinExistence type="inferred from homology"/>
<dbReference type="EC" id="5.2.1.8" evidence="1"/>
<dbReference type="EMBL" id="CP000849">
    <property type="protein sequence ID" value="ABV78547.1"/>
    <property type="molecule type" value="Genomic_DNA"/>
</dbReference>
<dbReference type="RefSeq" id="WP_011478013.1">
    <property type="nucleotide sequence ID" value="NC_009883.1"/>
</dbReference>
<dbReference type="SMR" id="A8GUQ0"/>
<dbReference type="KEGG" id="rbo:A1I_00735"/>
<dbReference type="HOGENOM" id="CLU_033058_2_2_5"/>
<dbReference type="GO" id="GO:0005737">
    <property type="term" value="C:cytoplasm"/>
    <property type="evidence" value="ECO:0007669"/>
    <property type="project" value="UniProtKB-SubCell"/>
</dbReference>
<dbReference type="GO" id="GO:0003755">
    <property type="term" value="F:peptidyl-prolyl cis-trans isomerase activity"/>
    <property type="evidence" value="ECO:0007669"/>
    <property type="project" value="UniProtKB-UniRule"/>
</dbReference>
<dbReference type="GO" id="GO:0044183">
    <property type="term" value="F:protein folding chaperone"/>
    <property type="evidence" value="ECO:0007669"/>
    <property type="project" value="TreeGrafter"/>
</dbReference>
<dbReference type="GO" id="GO:0043022">
    <property type="term" value="F:ribosome binding"/>
    <property type="evidence" value="ECO:0007669"/>
    <property type="project" value="TreeGrafter"/>
</dbReference>
<dbReference type="GO" id="GO:0051083">
    <property type="term" value="P:'de novo' cotranslational protein folding"/>
    <property type="evidence" value="ECO:0007669"/>
    <property type="project" value="TreeGrafter"/>
</dbReference>
<dbReference type="GO" id="GO:0051301">
    <property type="term" value="P:cell division"/>
    <property type="evidence" value="ECO:0007669"/>
    <property type="project" value="UniProtKB-KW"/>
</dbReference>
<dbReference type="GO" id="GO:0061077">
    <property type="term" value="P:chaperone-mediated protein folding"/>
    <property type="evidence" value="ECO:0007669"/>
    <property type="project" value="TreeGrafter"/>
</dbReference>
<dbReference type="GO" id="GO:0015031">
    <property type="term" value="P:protein transport"/>
    <property type="evidence" value="ECO:0007669"/>
    <property type="project" value="UniProtKB-UniRule"/>
</dbReference>
<dbReference type="GO" id="GO:0043335">
    <property type="term" value="P:protein unfolding"/>
    <property type="evidence" value="ECO:0007669"/>
    <property type="project" value="TreeGrafter"/>
</dbReference>
<dbReference type="FunFam" id="3.10.50.40:FF:000001">
    <property type="entry name" value="Trigger factor"/>
    <property type="match status" value="1"/>
</dbReference>
<dbReference type="Gene3D" id="3.10.50.40">
    <property type="match status" value="1"/>
</dbReference>
<dbReference type="Gene3D" id="3.30.70.1050">
    <property type="entry name" value="Trigger factor ribosome-binding domain"/>
    <property type="match status" value="1"/>
</dbReference>
<dbReference type="Gene3D" id="1.10.3120.10">
    <property type="entry name" value="Trigger factor, C-terminal domain"/>
    <property type="match status" value="1"/>
</dbReference>
<dbReference type="HAMAP" id="MF_00303">
    <property type="entry name" value="Trigger_factor_Tig"/>
    <property type="match status" value="1"/>
</dbReference>
<dbReference type="InterPro" id="IPR046357">
    <property type="entry name" value="PPIase_dom_sf"/>
</dbReference>
<dbReference type="InterPro" id="IPR001179">
    <property type="entry name" value="PPIase_FKBP_dom"/>
</dbReference>
<dbReference type="InterPro" id="IPR005215">
    <property type="entry name" value="Trig_fac"/>
</dbReference>
<dbReference type="InterPro" id="IPR008880">
    <property type="entry name" value="Trigger_fac_C"/>
</dbReference>
<dbReference type="InterPro" id="IPR037041">
    <property type="entry name" value="Trigger_fac_C_sf"/>
</dbReference>
<dbReference type="InterPro" id="IPR008881">
    <property type="entry name" value="Trigger_fac_ribosome-bd_bac"/>
</dbReference>
<dbReference type="InterPro" id="IPR036611">
    <property type="entry name" value="Trigger_fac_ribosome-bd_sf"/>
</dbReference>
<dbReference type="InterPro" id="IPR027304">
    <property type="entry name" value="Trigger_fact/SurA_dom_sf"/>
</dbReference>
<dbReference type="NCBIfam" id="TIGR00115">
    <property type="entry name" value="tig"/>
    <property type="match status" value="1"/>
</dbReference>
<dbReference type="PANTHER" id="PTHR30560">
    <property type="entry name" value="TRIGGER FACTOR CHAPERONE AND PEPTIDYL-PROLYL CIS/TRANS ISOMERASE"/>
    <property type="match status" value="1"/>
</dbReference>
<dbReference type="PANTHER" id="PTHR30560:SF3">
    <property type="entry name" value="TRIGGER FACTOR-LIKE PROTEIN TIG, CHLOROPLASTIC"/>
    <property type="match status" value="1"/>
</dbReference>
<dbReference type="Pfam" id="PF00254">
    <property type="entry name" value="FKBP_C"/>
    <property type="match status" value="1"/>
</dbReference>
<dbReference type="Pfam" id="PF05698">
    <property type="entry name" value="Trigger_C"/>
    <property type="match status" value="1"/>
</dbReference>
<dbReference type="Pfam" id="PF05697">
    <property type="entry name" value="Trigger_N"/>
    <property type="match status" value="1"/>
</dbReference>
<dbReference type="PIRSF" id="PIRSF003095">
    <property type="entry name" value="Trigger_factor"/>
    <property type="match status" value="1"/>
</dbReference>
<dbReference type="SUPFAM" id="SSF54534">
    <property type="entry name" value="FKBP-like"/>
    <property type="match status" value="1"/>
</dbReference>
<dbReference type="SUPFAM" id="SSF109998">
    <property type="entry name" value="Triger factor/SurA peptide-binding domain-like"/>
    <property type="match status" value="1"/>
</dbReference>
<dbReference type="SUPFAM" id="SSF102735">
    <property type="entry name" value="Trigger factor ribosome-binding domain"/>
    <property type="match status" value="1"/>
</dbReference>
<dbReference type="PROSITE" id="PS50059">
    <property type="entry name" value="FKBP_PPIASE"/>
    <property type="match status" value="1"/>
</dbReference>
<comment type="function">
    <text evidence="1">Involved in protein export. Acts as a chaperone by maintaining the newly synthesized protein in an open conformation. Functions as a peptidyl-prolyl cis-trans isomerase.</text>
</comment>
<comment type="catalytic activity">
    <reaction evidence="1">
        <text>[protein]-peptidylproline (omega=180) = [protein]-peptidylproline (omega=0)</text>
        <dbReference type="Rhea" id="RHEA:16237"/>
        <dbReference type="Rhea" id="RHEA-COMP:10747"/>
        <dbReference type="Rhea" id="RHEA-COMP:10748"/>
        <dbReference type="ChEBI" id="CHEBI:83833"/>
        <dbReference type="ChEBI" id="CHEBI:83834"/>
        <dbReference type="EC" id="5.2.1.8"/>
    </reaction>
</comment>
<comment type="subcellular location">
    <subcellularLocation>
        <location>Cytoplasm</location>
    </subcellularLocation>
    <text evidence="1">About half TF is bound to the ribosome near the polypeptide exit tunnel while the other half is free in the cytoplasm.</text>
</comment>
<comment type="domain">
    <text evidence="1">Consists of 3 domains; the N-terminus binds the ribosome, the middle domain has PPIase activity, while the C-terminus has intrinsic chaperone activity on its own.</text>
</comment>
<comment type="similarity">
    <text evidence="1">Belongs to the FKBP-type PPIase family. Tig subfamily.</text>
</comment>
<organism>
    <name type="scientific">Rickettsia bellii (strain OSU 85-389)</name>
    <dbReference type="NCBI Taxonomy" id="391896"/>
    <lineage>
        <taxon>Bacteria</taxon>
        <taxon>Pseudomonadati</taxon>
        <taxon>Pseudomonadota</taxon>
        <taxon>Alphaproteobacteria</taxon>
        <taxon>Rickettsiales</taxon>
        <taxon>Rickettsiaceae</taxon>
        <taxon>Rickettsieae</taxon>
        <taxon>Rickettsia</taxon>
        <taxon>belli group</taxon>
    </lineage>
</organism>
<accession>A8GUQ0</accession>
<protein>
    <recommendedName>
        <fullName evidence="1">Trigger factor</fullName>
        <shortName evidence="1">TF</shortName>
        <ecNumber evidence="1">5.2.1.8</ecNumber>
    </recommendedName>
    <alternativeName>
        <fullName evidence="1">PPIase</fullName>
    </alternativeName>
</protein>
<keyword id="KW-0131">Cell cycle</keyword>
<keyword id="KW-0132">Cell division</keyword>
<keyword id="KW-0143">Chaperone</keyword>
<keyword id="KW-0963">Cytoplasm</keyword>
<keyword id="KW-0413">Isomerase</keyword>
<keyword id="KW-0697">Rotamase</keyword>
<sequence length="445" mass="50847">MATTILKNEGLDFHIKISTPLSEIDNDIQKELVDLTKKVKIAGFRAGKVPIAIVEKKYGASVRNDIIEKRINDSVNHVIKEHNLNIIGRPKIDDLQNEPNKPLEFTIKMELLPKIDIPDLKKISINRPKLEVSPDDVEEQLKKLAEMMKSYTKESKAKAKDGDQITMDAVGYVKDEAFEGGKLTDFKVVIGSNALIPGFEKQLIGSKAGSEVEVNVTFPENYHAKDLAGKDARFVVQVKAVHTAEPTVIDDEFAKKFQSNSLEELRTHFTKKIENESEEAISTIMKMNLFDQLEKLLDFDVPESLLDQEKNILKSETDKSEQDDSVFKDKSPEQVKEYYDKLALRRVRIGLMLAEYAKDKNLQVEPDDLRRIIMQQARSFPGQENMLFDFYKNNPRAVEQLKGPALEEKAVQHIFDNAVNLKEKKYNRKELEKLLESEEQRITAM</sequence>